<gene>
    <name evidence="1" type="primary">rlmH</name>
    <name type="ordered locus">FTN_1543</name>
</gene>
<evidence type="ECO:0000255" key="1">
    <source>
        <dbReference type="HAMAP-Rule" id="MF_00658"/>
    </source>
</evidence>
<dbReference type="EC" id="2.1.1.177" evidence="1"/>
<dbReference type="EMBL" id="CP000439">
    <property type="protein sequence ID" value="ABK90407.1"/>
    <property type="molecule type" value="Genomic_DNA"/>
</dbReference>
<dbReference type="RefSeq" id="WP_003037531.1">
    <property type="nucleotide sequence ID" value="NZ_CP009633.1"/>
</dbReference>
<dbReference type="SMR" id="A0Q842"/>
<dbReference type="GeneID" id="75264724"/>
<dbReference type="KEGG" id="ftn:FTN_1543"/>
<dbReference type="KEGG" id="ftx:AW25_454"/>
<dbReference type="BioCyc" id="FTUL401614:G1G75-1595-MONOMER"/>
<dbReference type="Proteomes" id="UP000000762">
    <property type="component" value="Chromosome"/>
</dbReference>
<dbReference type="GO" id="GO:0005737">
    <property type="term" value="C:cytoplasm"/>
    <property type="evidence" value="ECO:0007669"/>
    <property type="project" value="UniProtKB-SubCell"/>
</dbReference>
<dbReference type="GO" id="GO:0070038">
    <property type="term" value="F:rRNA (pseudouridine-N3-)-methyltransferase activity"/>
    <property type="evidence" value="ECO:0007669"/>
    <property type="project" value="UniProtKB-UniRule"/>
</dbReference>
<dbReference type="CDD" id="cd18081">
    <property type="entry name" value="RlmH-like"/>
    <property type="match status" value="1"/>
</dbReference>
<dbReference type="Gene3D" id="3.40.1280.10">
    <property type="match status" value="1"/>
</dbReference>
<dbReference type="HAMAP" id="MF_00658">
    <property type="entry name" value="23SrRNA_methyltr_H"/>
    <property type="match status" value="1"/>
</dbReference>
<dbReference type="InterPro" id="IPR029028">
    <property type="entry name" value="Alpha/beta_knot_MTases"/>
</dbReference>
<dbReference type="InterPro" id="IPR003742">
    <property type="entry name" value="RlmH-like"/>
</dbReference>
<dbReference type="InterPro" id="IPR029026">
    <property type="entry name" value="tRNA_m1G_MTases_N"/>
</dbReference>
<dbReference type="NCBIfam" id="NF000986">
    <property type="entry name" value="PRK00103.1-4"/>
    <property type="match status" value="1"/>
</dbReference>
<dbReference type="NCBIfam" id="TIGR00246">
    <property type="entry name" value="tRNA_RlmH_YbeA"/>
    <property type="match status" value="1"/>
</dbReference>
<dbReference type="PANTHER" id="PTHR33603">
    <property type="entry name" value="METHYLTRANSFERASE"/>
    <property type="match status" value="1"/>
</dbReference>
<dbReference type="PANTHER" id="PTHR33603:SF1">
    <property type="entry name" value="RIBOSOMAL RNA LARGE SUBUNIT METHYLTRANSFERASE H"/>
    <property type="match status" value="1"/>
</dbReference>
<dbReference type="Pfam" id="PF02590">
    <property type="entry name" value="SPOUT_MTase"/>
    <property type="match status" value="1"/>
</dbReference>
<dbReference type="PIRSF" id="PIRSF004505">
    <property type="entry name" value="MT_bac"/>
    <property type="match status" value="1"/>
</dbReference>
<dbReference type="SUPFAM" id="SSF75217">
    <property type="entry name" value="alpha/beta knot"/>
    <property type="match status" value="1"/>
</dbReference>
<protein>
    <recommendedName>
        <fullName evidence="1">Ribosomal RNA large subunit methyltransferase H</fullName>
        <ecNumber evidence="1">2.1.1.177</ecNumber>
    </recommendedName>
    <alternativeName>
        <fullName evidence="1">23S rRNA (pseudouridine1915-N3)-methyltransferase</fullName>
    </alternativeName>
    <alternativeName>
        <fullName evidence="1">23S rRNA m3Psi1915 methyltransferase</fullName>
    </alternativeName>
    <alternativeName>
        <fullName evidence="1">rRNA (pseudouridine-N3-)-methyltransferase RlmH</fullName>
    </alternativeName>
</protein>
<organism>
    <name type="scientific">Francisella tularensis subsp. novicida (strain U112)</name>
    <dbReference type="NCBI Taxonomy" id="401614"/>
    <lineage>
        <taxon>Bacteria</taxon>
        <taxon>Pseudomonadati</taxon>
        <taxon>Pseudomonadota</taxon>
        <taxon>Gammaproteobacteria</taxon>
        <taxon>Thiotrichales</taxon>
        <taxon>Francisellaceae</taxon>
        <taxon>Francisella</taxon>
    </lineage>
</organism>
<feature type="chain" id="PRO_1000061785" description="Ribosomal RNA large subunit methyltransferase H">
    <location>
        <begin position="1"/>
        <end position="155"/>
    </location>
</feature>
<feature type="binding site" evidence="1">
    <location>
        <position position="73"/>
    </location>
    <ligand>
        <name>S-adenosyl-L-methionine</name>
        <dbReference type="ChEBI" id="CHEBI:59789"/>
    </ligand>
</feature>
<feature type="binding site" evidence="1">
    <location>
        <position position="104"/>
    </location>
    <ligand>
        <name>S-adenosyl-L-methionine</name>
        <dbReference type="ChEBI" id="CHEBI:59789"/>
    </ligand>
</feature>
<feature type="binding site" evidence="1">
    <location>
        <begin position="123"/>
        <end position="128"/>
    </location>
    <ligand>
        <name>S-adenosyl-L-methionine</name>
        <dbReference type="ChEBI" id="CHEBI:59789"/>
    </ligand>
</feature>
<sequence>MKIKIITLGEKPPKWVSDGYDEYKKRLSKSIPLELIELPIAKRTKTGNPKLWMEQEAKTILGKLNDSDHLVILDVNSKIISTEELADKMQNWKFNNPNVVILIGGPDGIDQSIKDIAKEKISISKMTFPHPLVRIIIAEQLYRAYTILEGHPYHK</sequence>
<reference key="1">
    <citation type="journal article" date="2007" name="Genome Biol.">
        <title>Comparison of Francisella tularensis genomes reveals evolutionary events associated with the emergence of human pathogenic strains.</title>
        <authorList>
            <person name="Rohmer L."/>
            <person name="Fong C."/>
            <person name="Abmayr S."/>
            <person name="Wasnick M."/>
            <person name="Larson Freeman T.J."/>
            <person name="Radey M."/>
            <person name="Guina T."/>
            <person name="Svensson K."/>
            <person name="Hayden H.S."/>
            <person name="Jacobs M."/>
            <person name="Gallagher L.A."/>
            <person name="Manoil C."/>
            <person name="Ernst R.K."/>
            <person name="Drees B."/>
            <person name="Buckley D."/>
            <person name="Haugen E."/>
            <person name="Bovee D."/>
            <person name="Zhou Y."/>
            <person name="Chang J."/>
            <person name="Levy R."/>
            <person name="Lim R."/>
            <person name="Gillett W."/>
            <person name="Guenthener D."/>
            <person name="Kang A."/>
            <person name="Shaffer S.A."/>
            <person name="Taylor G."/>
            <person name="Chen J."/>
            <person name="Gallis B."/>
            <person name="D'Argenio D.A."/>
            <person name="Forsman M."/>
            <person name="Olson M.V."/>
            <person name="Goodlett D.R."/>
            <person name="Kaul R."/>
            <person name="Miller S.I."/>
            <person name="Brittnacher M.J."/>
        </authorList>
    </citation>
    <scope>NUCLEOTIDE SEQUENCE [LARGE SCALE GENOMIC DNA]</scope>
    <source>
        <strain>U112</strain>
    </source>
</reference>
<accession>A0Q842</accession>
<comment type="function">
    <text evidence="1">Specifically methylates the pseudouridine at position 1915 (m3Psi1915) in 23S rRNA.</text>
</comment>
<comment type="catalytic activity">
    <reaction evidence="1">
        <text>pseudouridine(1915) in 23S rRNA + S-adenosyl-L-methionine = N(3)-methylpseudouridine(1915) in 23S rRNA + S-adenosyl-L-homocysteine + H(+)</text>
        <dbReference type="Rhea" id="RHEA:42752"/>
        <dbReference type="Rhea" id="RHEA-COMP:10221"/>
        <dbReference type="Rhea" id="RHEA-COMP:10222"/>
        <dbReference type="ChEBI" id="CHEBI:15378"/>
        <dbReference type="ChEBI" id="CHEBI:57856"/>
        <dbReference type="ChEBI" id="CHEBI:59789"/>
        <dbReference type="ChEBI" id="CHEBI:65314"/>
        <dbReference type="ChEBI" id="CHEBI:74486"/>
        <dbReference type="EC" id="2.1.1.177"/>
    </reaction>
</comment>
<comment type="subunit">
    <text evidence="1">Homodimer.</text>
</comment>
<comment type="subcellular location">
    <subcellularLocation>
        <location evidence="1">Cytoplasm</location>
    </subcellularLocation>
</comment>
<comment type="similarity">
    <text evidence="1">Belongs to the RNA methyltransferase RlmH family.</text>
</comment>
<name>RLMH_FRATN</name>
<proteinExistence type="inferred from homology"/>
<keyword id="KW-0963">Cytoplasm</keyword>
<keyword id="KW-0489">Methyltransferase</keyword>
<keyword id="KW-0698">rRNA processing</keyword>
<keyword id="KW-0949">S-adenosyl-L-methionine</keyword>
<keyword id="KW-0808">Transferase</keyword>